<feature type="chain" id="PRO_1000004525" description="Translation initiation factor IF-3">
    <location>
        <begin position="1"/>
        <end position="177"/>
    </location>
</feature>
<organism>
    <name type="scientific">Trichormus variabilis (strain ATCC 29413 / PCC 7937)</name>
    <name type="common">Anabaena variabilis</name>
    <dbReference type="NCBI Taxonomy" id="240292"/>
    <lineage>
        <taxon>Bacteria</taxon>
        <taxon>Bacillati</taxon>
        <taxon>Cyanobacteriota</taxon>
        <taxon>Cyanophyceae</taxon>
        <taxon>Nostocales</taxon>
        <taxon>Nostocaceae</taxon>
        <taxon>Trichormus</taxon>
    </lineage>
</organism>
<proteinExistence type="inferred from homology"/>
<protein>
    <recommendedName>
        <fullName evidence="1">Translation initiation factor IF-3</fullName>
    </recommendedName>
</protein>
<dbReference type="EMBL" id="CP000117">
    <property type="protein sequence ID" value="ABA21660.1"/>
    <property type="molecule type" value="Genomic_DNA"/>
</dbReference>
<dbReference type="RefSeq" id="WP_011318830.1">
    <property type="nucleotide sequence ID" value="NC_007413.1"/>
</dbReference>
<dbReference type="SMR" id="Q3MBH6"/>
<dbReference type="STRING" id="240292.Ava_2038"/>
<dbReference type="GeneID" id="58724717"/>
<dbReference type="KEGG" id="ava:Ava_2038"/>
<dbReference type="eggNOG" id="COG0290">
    <property type="taxonomic scope" value="Bacteria"/>
</dbReference>
<dbReference type="HOGENOM" id="CLU_054919_3_1_3"/>
<dbReference type="Proteomes" id="UP000002533">
    <property type="component" value="Chromosome"/>
</dbReference>
<dbReference type="GO" id="GO:0005829">
    <property type="term" value="C:cytosol"/>
    <property type="evidence" value="ECO:0007669"/>
    <property type="project" value="TreeGrafter"/>
</dbReference>
<dbReference type="GO" id="GO:0016020">
    <property type="term" value="C:membrane"/>
    <property type="evidence" value="ECO:0007669"/>
    <property type="project" value="TreeGrafter"/>
</dbReference>
<dbReference type="GO" id="GO:0043022">
    <property type="term" value="F:ribosome binding"/>
    <property type="evidence" value="ECO:0007669"/>
    <property type="project" value="TreeGrafter"/>
</dbReference>
<dbReference type="GO" id="GO:0003743">
    <property type="term" value="F:translation initiation factor activity"/>
    <property type="evidence" value="ECO:0007669"/>
    <property type="project" value="UniProtKB-UniRule"/>
</dbReference>
<dbReference type="GO" id="GO:0032790">
    <property type="term" value="P:ribosome disassembly"/>
    <property type="evidence" value="ECO:0007669"/>
    <property type="project" value="TreeGrafter"/>
</dbReference>
<dbReference type="FunFam" id="3.10.20.80:FF:000001">
    <property type="entry name" value="Translation initiation factor IF-3"/>
    <property type="match status" value="1"/>
</dbReference>
<dbReference type="FunFam" id="3.30.110.10:FF:000001">
    <property type="entry name" value="Translation initiation factor IF-3"/>
    <property type="match status" value="1"/>
</dbReference>
<dbReference type="Gene3D" id="3.30.110.10">
    <property type="entry name" value="Translation initiation factor 3 (IF-3), C-terminal domain"/>
    <property type="match status" value="1"/>
</dbReference>
<dbReference type="Gene3D" id="3.10.20.80">
    <property type="entry name" value="Translation initiation factor 3 (IF-3), N-terminal domain"/>
    <property type="match status" value="1"/>
</dbReference>
<dbReference type="HAMAP" id="MF_00080">
    <property type="entry name" value="IF_3"/>
    <property type="match status" value="1"/>
</dbReference>
<dbReference type="InterPro" id="IPR036788">
    <property type="entry name" value="T_IF-3_C_sf"/>
</dbReference>
<dbReference type="InterPro" id="IPR036787">
    <property type="entry name" value="T_IF-3_N_sf"/>
</dbReference>
<dbReference type="InterPro" id="IPR019813">
    <property type="entry name" value="Translation_initiation_fac3_CS"/>
</dbReference>
<dbReference type="InterPro" id="IPR001288">
    <property type="entry name" value="Translation_initiation_fac_3"/>
</dbReference>
<dbReference type="InterPro" id="IPR019815">
    <property type="entry name" value="Translation_initiation_fac_3_C"/>
</dbReference>
<dbReference type="InterPro" id="IPR019814">
    <property type="entry name" value="Translation_initiation_fac_3_N"/>
</dbReference>
<dbReference type="NCBIfam" id="TIGR00168">
    <property type="entry name" value="infC"/>
    <property type="match status" value="1"/>
</dbReference>
<dbReference type="PANTHER" id="PTHR10938">
    <property type="entry name" value="TRANSLATION INITIATION FACTOR IF-3"/>
    <property type="match status" value="1"/>
</dbReference>
<dbReference type="PANTHER" id="PTHR10938:SF0">
    <property type="entry name" value="TRANSLATION INITIATION FACTOR IF-3, MITOCHONDRIAL"/>
    <property type="match status" value="1"/>
</dbReference>
<dbReference type="Pfam" id="PF00707">
    <property type="entry name" value="IF3_C"/>
    <property type="match status" value="1"/>
</dbReference>
<dbReference type="Pfam" id="PF05198">
    <property type="entry name" value="IF3_N"/>
    <property type="match status" value="1"/>
</dbReference>
<dbReference type="SUPFAM" id="SSF55200">
    <property type="entry name" value="Translation initiation factor IF3, C-terminal domain"/>
    <property type="match status" value="1"/>
</dbReference>
<dbReference type="SUPFAM" id="SSF54364">
    <property type="entry name" value="Translation initiation factor IF3, N-terminal domain"/>
    <property type="match status" value="1"/>
</dbReference>
<dbReference type="PROSITE" id="PS00938">
    <property type="entry name" value="IF3"/>
    <property type="match status" value="1"/>
</dbReference>
<keyword id="KW-0963">Cytoplasm</keyword>
<keyword id="KW-0396">Initiation factor</keyword>
<keyword id="KW-0648">Protein biosynthesis</keyword>
<evidence type="ECO:0000255" key="1">
    <source>
        <dbReference type="HAMAP-Rule" id="MF_00080"/>
    </source>
</evidence>
<gene>
    <name evidence="1" type="primary">infC</name>
    <name type="ordered locus">Ava_2038</name>
</gene>
<reference key="1">
    <citation type="journal article" date="2014" name="Stand. Genomic Sci.">
        <title>Complete genome sequence of Anabaena variabilis ATCC 29413.</title>
        <authorList>
            <person name="Thiel T."/>
            <person name="Pratte B.S."/>
            <person name="Zhong J."/>
            <person name="Goodwin L."/>
            <person name="Copeland A."/>
            <person name="Lucas S."/>
            <person name="Han C."/>
            <person name="Pitluck S."/>
            <person name="Land M.L."/>
            <person name="Kyrpides N.C."/>
            <person name="Woyke T."/>
        </authorList>
    </citation>
    <scope>NUCLEOTIDE SEQUENCE [LARGE SCALE GENOMIC DNA]</scope>
    <source>
        <strain>ATCC 29413 / PCC 7937</strain>
    </source>
</reference>
<accession>Q3MBH6</accession>
<comment type="function">
    <text evidence="1">IF-3 binds to the 30S ribosomal subunit and shifts the equilibrium between 70S ribosomes and their 50S and 30S subunits in favor of the free subunits, thus enhancing the availability of 30S subunits on which protein synthesis initiation begins.</text>
</comment>
<comment type="subunit">
    <text evidence="1">Monomer.</text>
</comment>
<comment type="subcellular location">
    <subcellularLocation>
        <location evidence="1">Cytoplasm</location>
    </subcellularLocation>
</comment>
<comment type="similarity">
    <text evidence="1">Belongs to the IF-3 family.</text>
</comment>
<sequence>MPVIEKKRTRDLPQINERIRFPKIRVIDTDGSQLGILTPQEALQLAEEKELDLVLLSDKADPPVCRIMDYGKYKFEQEKKAREARKKQHTADVKEVKMRYKIEEHDYNVRVKQAERFLKDGDKVKATVMFRGREIQHSDLAEDLLKRMATDLEPFGEVQQAPKKEGRNMMMLISPKK</sequence>
<name>IF3_TRIV2</name>